<feature type="chain" id="PRO_0000231350" description="S-adenosylmethionine:tRNA ribosyltransferase-isomerase">
    <location>
        <begin position="1"/>
        <end position="346"/>
    </location>
</feature>
<comment type="function">
    <text evidence="1">Transfers and isomerizes the ribose moiety from AdoMet to the 7-aminomethyl group of 7-deazaguanine (preQ1-tRNA) to give epoxyqueuosine (oQ-tRNA).</text>
</comment>
<comment type="catalytic activity">
    <reaction evidence="1">
        <text>7-aminomethyl-7-carbaguanosine(34) in tRNA + S-adenosyl-L-methionine = epoxyqueuosine(34) in tRNA + adenine + L-methionine + 2 H(+)</text>
        <dbReference type="Rhea" id="RHEA:32155"/>
        <dbReference type="Rhea" id="RHEA-COMP:10342"/>
        <dbReference type="Rhea" id="RHEA-COMP:18582"/>
        <dbReference type="ChEBI" id="CHEBI:15378"/>
        <dbReference type="ChEBI" id="CHEBI:16708"/>
        <dbReference type="ChEBI" id="CHEBI:57844"/>
        <dbReference type="ChEBI" id="CHEBI:59789"/>
        <dbReference type="ChEBI" id="CHEBI:82833"/>
        <dbReference type="ChEBI" id="CHEBI:194443"/>
        <dbReference type="EC" id="2.4.99.17"/>
    </reaction>
</comment>
<comment type="pathway">
    <text evidence="1">tRNA modification; tRNA-queuosine biosynthesis.</text>
</comment>
<comment type="subunit">
    <text evidence="1">Monomer.</text>
</comment>
<comment type="subcellular location">
    <subcellularLocation>
        <location evidence="1">Cytoplasm</location>
    </subcellularLocation>
</comment>
<comment type="similarity">
    <text evidence="1">Belongs to the QueA family.</text>
</comment>
<proteinExistence type="inferred from homology"/>
<dbReference type="EC" id="2.4.99.17" evidence="1"/>
<dbReference type="EMBL" id="AE004969">
    <property type="protein sequence ID" value="AAW88814.1"/>
    <property type="molecule type" value="Genomic_DNA"/>
</dbReference>
<dbReference type="RefSeq" id="WP_010950980.1">
    <property type="nucleotide sequence ID" value="NC_002946.2"/>
</dbReference>
<dbReference type="RefSeq" id="YP_207226.1">
    <property type="nucleotide sequence ID" value="NC_002946.2"/>
</dbReference>
<dbReference type="SMR" id="Q5FAH3"/>
<dbReference type="STRING" id="242231.NGO_0047"/>
<dbReference type="KEGG" id="ngo:NGO_0047"/>
<dbReference type="PATRIC" id="fig|242231.10.peg.52"/>
<dbReference type="HOGENOM" id="CLU_039110_1_0_4"/>
<dbReference type="UniPathway" id="UPA00392"/>
<dbReference type="Proteomes" id="UP000000535">
    <property type="component" value="Chromosome"/>
</dbReference>
<dbReference type="GO" id="GO:0005737">
    <property type="term" value="C:cytoplasm"/>
    <property type="evidence" value="ECO:0007669"/>
    <property type="project" value="UniProtKB-SubCell"/>
</dbReference>
<dbReference type="GO" id="GO:0051075">
    <property type="term" value="F:S-adenosylmethionine:tRNA ribosyltransferase-isomerase activity"/>
    <property type="evidence" value="ECO:0007669"/>
    <property type="project" value="UniProtKB-EC"/>
</dbReference>
<dbReference type="GO" id="GO:0008616">
    <property type="term" value="P:queuosine biosynthetic process"/>
    <property type="evidence" value="ECO:0007669"/>
    <property type="project" value="UniProtKB-UniRule"/>
</dbReference>
<dbReference type="GO" id="GO:0002099">
    <property type="term" value="P:tRNA wobble guanine modification"/>
    <property type="evidence" value="ECO:0007669"/>
    <property type="project" value="TreeGrafter"/>
</dbReference>
<dbReference type="FunFam" id="3.40.1780.10:FF:000001">
    <property type="entry name" value="S-adenosylmethionine:tRNA ribosyltransferase-isomerase"/>
    <property type="match status" value="1"/>
</dbReference>
<dbReference type="Gene3D" id="2.40.10.240">
    <property type="entry name" value="QueA-like"/>
    <property type="match status" value="1"/>
</dbReference>
<dbReference type="Gene3D" id="3.40.1780.10">
    <property type="entry name" value="QueA-like"/>
    <property type="match status" value="1"/>
</dbReference>
<dbReference type="HAMAP" id="MF_00113">
    <property type="entry name" value="QueA"/>
    <property type="match status" value="1"/>
</dbReference>
<dbReference type="InterPro" id="IPR003699">
    <property type="entry name" value="QueA"/>
</dbReference>
<dbReference type="InterPro" id="IPR042118">
    <property type="entry name" value="QueA_dom1"/>
</dbReference>
<dbReference type="InterPro" id="IPR042119">
    <property type="entry name" value="QueA_dom2"/>
</dbReference>
<dbReference type="InterPro" id="IPR036100">
    <property type="entry name" value="QueA_sf"/>
</dbReference>
<dbReference type="NCBIfam" id="NF001140">
    <property type="entry name" value="PRK00147.1"/>
    <property type="match status" value="1"/>
</dbReference>
<dbReference type="NCBIfam" id="TIGR00113">
    <property type="entry name" value="queA"/>
    <property type="match status" value="1"/>
</dbReference>
<dbReference type="PANTHER" id="PTHR30307">
    <property type="entry name" value="S-ADENOSYLMETHIONINE:TRNA RIBOSYLTRANSFERASE-ISOMERASE"/>
    <property type="match status" value="1"/>
</dbReference>
<dbReference type="PANTHER" id="PTHR30307:SF0">
    <property type="entry name" value="S-ADENOSYLMETHIONINE:TRNA RIBOSYLTRANSFERASE-ISOMERASE"/>
    <property type="match status" value="1"/>
</dbReference>
<dbReference type="Pfam" id="PF02547">
    <property type="entry name" value="Queuosine_synth"/>
    <property type="match status" value="1"/>
</dbReference>
<dbReference type="SUPFAM" id="SSF111337">
    <property type="entry name" value="QueA-like"/>
    <property type="match status" value="1"/>
</dbReference>
<protein>
    <recommendedName>
        <fullName evidence="1">S-adenosylmethionine:tRNA ribosyltransferase-isomerase</fullName>
        <ecNumber evidence="1">2.4.99.17</ecNumber>
    </recommendedName>
    <alternativeName>
        <fullName evidence="1">Queuosine biosynthesis protein QueA</fullName>
    </alternativeName>
</protein>
<accession>Q5FAH3</accession>
<evidence type="ECO:0000255" key="1">
    <source>
        <dbReference type="HAMAP-Rule" id="MF_00113"/>
    </source>
</evidence>
<name>QUEA_NEIG1</name>
<reference key="1">
    <citation type="submission" date="2003-03" db="EMBL/GenBank/DDBJ databases">
        <title>The complete genome sequence of Neisseria gonorrhoeae.</title>
        <authorList>
            <person name="Lewis L.A."/>
            <person name="Gillaspy A.F."/>
            <person name="McLaughlin R.E."/>
            <person name="Gipson M."/>
            <person name="Ducey T.F."/>
            <person name="Ownbey T."/>
            <person name="Hartman K."/>
            <person name="Nydick C."/>
            <person name="Carson M.B."/>
            <person name="Vaughn J."/>
            <person name="Thomson C."/>
            <person name="Song L."/>
            <person name="Lin S."/>
            <person name="Yuan X."/>
            <person name="Najar F."/>
            <person name="Zhan M."/>
            <person name="Ren Q."/>
            <person name="Zhu H."/>
            <person name="Qi S."/>
            <person name="Kenton S.M."/>
            <person name="Lai H."/>
            <person name="White J.D."/>
            <person name="Clifton S."/>
            <person name="Roe B.A."/>
            <person name="Dyer D.W."/>
        </authorList>
    </citation>
    <scope>NUCLEOTIDE SEQUENCE [LARGE SCALE GENOMIC DNA]</scope>
    <source>
        <strain>ATCC 700825 / FA 1090</strain>
    </source>
</reference>
<gene>
    <name evidence="1" type="primary">queA</name>
    <name type="ordered locus">NGO_0047</name>
</gene>
<sequence length="346" mass="38151">MDISDFDFTLPEHLIAQHPPEVRGSSRLLVALSDMPLQDRVFGDLPDYVEAGDVLVFNNTKVMKARLFGQKDSGGRIEALIERVLDNHTALAHIRSSKSPKPGMGLVFEGGIRAVMVGREGELFCLRFEGGQTVYELLEQNGHLPLPPYIERAADADDDSRYQTVYAKYQGAVAAPTAGLHFTEELLRRLKDKGAVTAEVTLHVGAGTFQPVRVDKIEEHKMHSEWFEVPSETVAAVEAAKARGNKAWAVGTTSMRALESAARATGYLKDGQGDTDIFITPGYRFNVVDRLVTNFHLPKSTLLMLVGAFSGMGHIRAVYRHAIEREYRFFSYGDAMVLGRNEGGGL</sequence>
<organism>
    <name type="scientific">Neisseria gonorrhoeae (strain ATCC 700825 / FA 1090)</name>
    <dbReference type="NCBI Taxonomy" id="242231"/>
    <lineage>
        <taxon>Bacteria</taxon>
        <taxon>Pseudomonadati</taxon>
        <taxon>Pseudomonadota</taxon>
        <taxon>Betaproteobacteria</taxon>
        <taxon>Neisseriales</taxon>
        <taxon>Neisseriaceae</taxon>
        <taxon>Neisseria</taxon>
    </lineage>
</organism>
<keyword id="KW-0963">Cytoplasm</keyword>
<keyword id="KW-0671">Queuosine biosynthesis</keyword>
<keyword id="KW-1185">Reference proteome</keyword>
<keyword id="KW-0949">S-adenosyl-L-methionine</keyword>
<keyword id="KW-0808">Transferase</keyword>